<proteinExistence type="inferred from homology"/>
<comment type="function">
    <text evidence="1">NQR complex catalyzes the reduction of ubiquinone-1 to ubiquinol by two successive reactions, coupled with the transport of Na(+) ions from the cytoplasm to the periplasm. NqrA to NqrE are probably involved in the second step, the conversion of ubisemiquinone to ubiquinol.</text>
</comment>
<comment type="catalytic activity">
    <reaction evidence="1">
        <text>a ubiquinone + n Na(+)(in) + NADH + H(+) = a ubiquinol + n Na(+)(out) + NAD(+)</text>
        <dbReference type="Rhea" id="RHEA:47748"/>
        <dbReference type="Rhea" id="RHEA-COMP:9565"/>
        <dbReference type="Rhea" id="RHEA-COMP:9566"/>
        <dbReference type="ChEBI" id="CHEBI:15378"/>
        <dbReference type="ChEBI" id="CHEBI:16389"/>
        <dbReference type="ChEBI" id="CHEBI:17976"/>
        <dbReference type="ChEBI" id="CHEBI:29101"/>
        <dbReference type="ChEBI" id="CHEBI:57540"/>
        <dbReference type="ChEBI" id="CHEBI:57945"/>
        <dbReference type="EC" id="7.2.1.1"/>
    </reaction>
</comment>
<comment type="cofactor">
    <cofactor evidence="1">
        <name>FMN</name>
        <dbReference type="ChEBI" id="CHEBI:58210"/>
    </cofactor>
</comment>
<comment type="subunit">
    <text evidence="1">Composed of six subunits; NqrA, NqrB, NqrC, NqrD, NqrE and NqrF.</text>
</comment>
<comment type="subcellular location">
    <subcellularLocation>
        <location evidence="1">Cell inner membrane</location>
        <topology evidence="1">Single-pass membrane protein</topology>
    </subcellularLocation>
</comment>
<comment type="similarity">
    <text evidence="1">Belongs to the NqrC family.</text>
</comment>
<comment type="caution">
    <text evidence="1 2">The residue potentially involved in the covalent binding of FMN is a Ser instead of a Thr.</text>
</comment>
<evidence type="ECO:0000255" key="1">
    <source>
        <dbReference type="HAMAP-Rule" id="MF_00427"/>
    </source>
</evidence>
<evidence type="ECO:0000305" key="2"/>
<reference key="1">
    <citation type="journal article" date="2000" name="Nature">
        <title>Complete DNA sequence of a serogroup A strain of Neisseria meningitidis Z2491.</title>
        <authorList>
            <person name="Parkhill J."/>
            <person name="Achtman M."/>
            <person name="James K.D."/>
            <person name="Bentley S.D."/>
            <person name="Churcher C.M."/>
            <person name="Klee S.R."/>
            <person name="Morelli G."/>
            <person name="Basham D."/>
            <person name="Brown D."/>
            <person name="Chillingworth T."/>
            <person name="Davies R.M."/>
            <person name="Davis P."/>
            <person name="Devlin K."/>
            <person name="Feltwell T."/>
            <person name="Hamlin N."/>
            <person name="Holroyd S."/>
            <person name="Jagels K."/>
            <person name="Leather S."/>
            <person name="Moule S."/>
            <person name="Mungall K.L."/>
            <person name="Quail M.A."/>
            <person name="Rajandream M.A."/>
            <person name="Rutherford K.M."/>
            <person name="Simmonds M."/>
            <person name="Skelton J."/>
            <person name="Whitehead S."/>
            <person name="Spratt B.G."/>
            <person name="Barrell B.G."/>
        </authorList>
    </citation>
    <scope>NUCLEOTIDE SEQUENCE [LARGE SCALE GENOMIC DNA]</scope>
    <source>
        <strain>DSM 15465 / Z2491</strain>
    </source>
</reference>
<name>NQRC_NEIMA</name>
<feature type="chain" id="PRO_0000214217" description="Na(+)-translocating NADH-quinone reductase subunit C">
    <location>
        <begin position="1"/>
        <end position="258"/>
    </location>
</feature>
<feature type="transmembrane region" description="Helical" evidence="1">
    <location>
        <begin position="14"/>
        <end position="34"/>
    </location>
</feature>
<feature type="modified residue" description="FMN phosphoryl serine" evidence="1">
    <location>
        <position position="226"/>
    </location>
</feature>
<gene>
    <name evidence="1" type="primary">nqrC</name>
    <name type="ordered locus">NMA0750</name>
</gene>
<organism>
    <name type="scientific">Neisseria meningitidis serogroup A / serotype 4A (strain DSM 15465 / Z2491)</name>
    <dbReference type="NCBI Taxonomy" id="122587"/>
    <lineage>
        <taxon>Bacteria</taxon>
        <taxon>Pseudomonadati</taxon>
        <taxon>Pseudomonadota</taxon>
        <taxon>Betaproteobacteria</taxon>
        <taxon>Neisseriales</taxon>
        <taxon>Neisseriaceae</taxon>
        <taxon>Neisseria</taxon>
    </lineage>
</organism>
<keyword id="KW-0997">Cell inner membrane</keyword>
<keyword id="KW-1003">Cell membrane</keyword>
<keyword id="KW-0285">Flavoprotein</keyword>
<keyword id="KW-0288">FMN</keyword>
<keyword id="KW-0406">Ion transport</keyword>
<keyword id="KW-0472">Membrane</keyword>
<keyword id="KW-0520">NAD</keyword>
<keyword id="KW-0597">Phosphoprotein</keyword>
<keyword id="KW-0915">Sodium</keyword>
<keyword id="KW-0739">Sodium transport</keyword>
<keyword id="KW-1278">Translocase</keyword>
<keyword id="KW-0812">Transmembrane</keyword>
<keyword id="KW-1133">Transmembrane helix</keyword>
<keyword id="KW-0813">Transport</keyword>
<keyword id="KW-0830">Ubiquinone</keyword>
<accession>Q9JVQ0</accession>
<accession>A1IQH0</accession>
<dbReference type="EC" id="7.2.1.1" evidence="1"/>
<dbReference type="EMBL" id="AL157959">
    <property type="protein sequence ID" value="CAM08001.1"/>
    <property type="molecule type" value="Genomic_DNA"/>
</dbReference>
<dbReference type="PIR" id="G81918">
    <property type="entry name" value="G81918"/>
</dbReference>
<dbReference type="RefSeq" id="WP_002233618.1">
    <property type="nucleotide sequence ID" value="NC_003116.1"/>
</dbReference>
<dbReference type="SMR" id="Q9JVQ0"/>
<dbReference type="EnsemblBacteria" id="CAM08001">
    <property type="protein sequence ID" value="CAM08001"/>
    <property type="gene ID" value="NMA0750"/>
</dbReference>
<dbReference type="KEGG" id="nma:NMA0750"/>
<dbReference type="HOGENOM" id="CLU_077882_0_1_4"/>
<dbReference type="Proteomes" id="UP000000626">
    <property type="component" value="Chromosome"/>
</dbReference>
<dbReference type="GO" id="GO:0005886">
    <property type="term" value="C:plasma membrane"/>
    <property type="evidence" value="ECO:0007669"/>
    <property type="project" value="UniProtKB-SubCell"/>
</dbReference>
<dbReference type="GO" id="GO:0010181">
    <property type="term" value="F:FMN binding"/>
    <property type="evidence" value="ECO:0007669"/>
    <property type="project" value="UniProtKB-UniRule"/>
</dbReference>
<dbReference type="GO" id="GO:0016655">
    <property type="term" value="F:oxidoreductase activity, acting on NAD(P)H, quinone or similar compound as acceptor"/>
    <property type="evidence" value="ECO:0007669"/>
    <property type="project" value="UniProtKB-UniRule"/>
</dbReference>
<dbReference type="GO" id="GO:0006814">
    <property type="term" value="P:sodium ion transport"/>
    <property type="evidence" value="ECO:0007669"/>
    <property type="project" value="UniProtKB-UniRule"/>
</dbReference>
<dbReference type="HAMAP" id="MF_00427">
    <property type="entry name" value="NqrC"/>
    <property type="match status" value="1"/>
</dbReference>
<dbReference type="InterPro" id="IPR007329">
    <property type="entry name" value="FMN-bd"/>
</dbReference>
<dbReference type="InterPro" id="IPR010204">
    <property type="entry name" value="NqrC"/>
</dbReference>
<dbReference type="NCBIfam" id="TIGR01938">
    <property type="entry name" value="nqrC"/>
    <property type="match status" value="1"/>
</dbReference>
<dbReference type="NCBIfam" id="NF003746">
    <property type="entry name" value="PRK05346.1-1"/>
    <property type="match status" value="1"/>
</dbReference>
<dbReference type="NCBIfam" id="NF003749">
    <property type="entry name" value="PRK05346.1-5"/>
    <property type="match status" value="1"/>
</dbReference>
<dbReference type="PANTHER" id="PTHR37838">
    <property type="entry name" value="NA(+)-TRANSLOCATING NADH-QUINONE REDUCTASE SUBUNIT C"/>
    <property type="match status" value="1"/>
</dbReference>
<dbReference type="PANTHER" id="PTHR37838:SF1">
    <property type="entry name" value="NA(+)-TRANSLOCATING NADH-QUINONE REDUCTASE SUBUNIT C"/>
    <property type="match status" value="1"/>
</dbReference>
<dbReference type="Pfam" id="PF04205">
    <property type="entry name" value="FMN_bind"/>
    <property type="match status" value="1"/>
</dbReference>
<dbReference type="PIRSF" id="PIRSF009437">
    <property type="entry name" value="NQR-1_subunit_C"/>
    <property type="match status" value="1"/>
</dbReference>
<dbReference type="SMART" id="SM00900">
    <property type="entry name" value="FMN_bind"/>
    <property type="match status" value="1"/>
</dbReference>
<protein>
    <recommendedName>
        <fullName evidence="1">Na(+)-translocating NADH-quinone reductase subunit C</fullName>
        <shortName evidence="1">Na(+)-NQR subunit C</shortName>
        <shortName evidence="1">Na(+)-translocating NQR subunit C</shortName>
        <ecNumber evidence="1">7.2.1.1</ecNumber>
    </recommendedName>
    <alternativeName>
        <fullName evidence="1">NQR complex subunit C</fullName>
    </alternativeName>
    <alternativeName>
        <fullName evidence="1">NQR-1 subunit C</fullName>
    </alternativeName>
</protein>
<sequence>MAKKFDKDSFSGTLIVVLAVSLICSVIVAGAVVGLKPIQEKQKLQDKQGYILSVAGLMDKDTDIGKTFAERIEQRVVDLATGEYVKDAPKDFSARIAGKDPAQSIRIKPEDDLAGIKSRAKYTEVYLVKGEDGKIGQIILPMHGNGLWSVMYGFVAIQPDGNTINGITYYEQGETPGLGGEIGNPLWQQKFVGKKLFDGQGKLALHVGKGAGSDKEHGVDALSGASLTSKGVQGSFAYWFGENGYIPYLNKLKSAGAQ</sequence>